<dbReference type="EC" id="5.2.1.8" evidence="1"/>
<dbReference type="EMBL" id="AE014613">
    <property type="protein sequence ID" value="AAO67828.1"/>
    <property type="molecule type" value="Genomic_DNA"/>
</dbReference>
<dbReference type="EMBL" id="AL513382">
    <property type="protein sequence ID" value="CAD01248.1"/>
    <property type="molecule type" value="Genomic_DNA"/>
</dbReference>
<dbReference type="RefSeq" id="NP_454704.1">
    <property type="nucleotide sequence ID" value="NC_003198.1"/>
</dbReference>
<dbReference type="RefSeq" id="WP_000800482.1">
    <property type="nucleotide sequence ID" value="NZ_WSUR01000028.1"/>
</dbReference>
<dbReference type="SMR" id="Q8XEV3"/>
<dbReference type="STRING" id="220341.gene:17584150"/>
<dbReference type="KEGG" id="stt:t0095"/>
<dbReference type="KEGG" id="sty:STY0107"/>
<dbReference type="PATRIC" id="fig|220341.7.peg.106"/>
<dbReference type="eggNOG" id="COG0760">
    <property type="taxonomic scope" value="Bacteria"/>
</dbReference>
<dbReference type="HOGENOM" id="CLU_034646_11_0_6"/>
<dbReference type="OMA" id="HGWHIVQ"/>
<dbReference type="OrthoDB" id="14196at2"/>
<dbReference type="Proteomes" id="UP000000541">
    <property type="component" value="Chromosome"/>
</dbReference>
<dbReference type="Proteomes" id="UP000002670">
    <property type="component" value="Chromosome"/>
</dbReference>
<dbReference type="GO" id="GO:0030288">
    <property type="term" value="C:outer membrane-bounded periplasmic space"/>
    <property type="evidence" value="ECO:0007669"/>
    <property type="project" value="InterPro"/>
</dbReference>
<dbReference type="GO" id="GO:0042277">
    <property type="term" value="F:peptide binding"/>
    <property type="evidence" value="ECO:0007669"/>
    <property type="project" value="InterPro"/>
</dbReference>
<dbReference type="GO" id="GO:0003755">
    <property type="term" value="F:peptidyl-prolyl cis-trans isomerase activity"/>
    <property type="evidence" value="ECO:0007669"/>
    <property type="project" value="UniProtKB-UniRule"/>
</dbReference>
<dbReference type="GO" id="GO:0051082">
    <property type="term" value="F:unfolded protein binding"/>
    <property type="evidence" value="ECO:0007669"/>
    <property type="project" value="UniProtKB-UniRule"/>
</dbReference>
<dbReference type="GO" id="GO:0043165">
    <property type="term" value="P:Gram-negative-bacterium-type cell outer membrane assembly"/>
    <property type="evidence" value="ECO:0007669"/>
    <property type="project" value="InterPro"/>
</dbReference>
<dbReference type="GO" id="GO:0006457">
    <property type="term" value="P:protein folding"/>
    <property type="evidence" value="ECO:0007669"/>
    <property type="project" value="UniProtKB-UniRule"/>
</dbReference>
<dbReference type="GO" id="GO:0050821">
    <property type="term" value="P:protein stabilization"/>
    <property type="evidence" value="ECO:0007669"/>
    <property type="project" value="InterPro"/>
</dbReference>
<dbReference type="FunFam" id="1.10.4030.10:FF:000002">
    <property type="entry name" value="Chaperone SurA"/>
    <property type="match status" value="1"/>
</dbReference>
<dbReference type="FunFam" id="3.10.50.40:FF:000007">
    <property type="entry name" value="Chaperone SurA"/>
    <property type="match status" value="1"/>
</dbReference>
<dbReference type="Gene3D" id="3.10.50.40">
    <property type="match status" value="2"/>
</dbReference>
<dbReference type="Gene3D" id="1.10.4030.10">
    <property type="entry name" value="Porin chaperone SurA, peptide-binding domain"/>
    <property type="match status" value="2"/>
</dbReference>
<dbReference type="HAMAP" id="MF_01183">
    <property type="entry name" value="Chaperone_SurA"/>
    <property type="match status" value="1"/>
</dbReference>
<dbReference type="InterPro" id="IPR050280">
    <property type="entry name" value="OMP_Chaperone_SurA"/>
</dbReference>
<dbReference type="InterPro" id="IPR046357">
    <property type="entry name" value="PPIase_dom_sf"/>
</dbReference>
<dbReference type="InterPro" id="IPR000297">
    <property type="entry name" value="PPIase_PpiC"/>
</dbReference>
<dbReference type="InterPro" id="IPR023058">
    <property type="entry name" value="PPIase_PpiC_CS"/>
</dbReference>
<dbReference type="InterPro" id="IPR023034">
    <property type="entry name" value="PPIase_SurA"/>
</dbReference>
<dbReference type="InterPro" id="IPR015391">
    <property type="entry name" value="SurA_N"/>
</dbReference>
<dbReference type="InterPro" id="IPR027304">
    <property type="entry name" value="Trigger_fact/SurA_dom_sf"/>
</dbReference>
<dbReference type="NCBIfam" id="NF008038">
    <property type="entry name" value="PRK10770.1"/>
    <property type="match status" value="1"/>
</dbReference>
<dbReference type="PANTHER" id="PTHR47637">
    <property type="entry name" value="CHAPERONE SURA"/>
    <property type="match status" value="1"/>
</dbReference>
<dbReference type="PANTHER" id="PTHR47637:SF1">
    <property type="entry name" value="CHAPERONE SURA"/>
    <property type="match status" value="1"/>
</dbReference>
<dbReference type="Pfam" id="PF00639">
    <property type="entry name" value="Rotamase"/>
    <property type="match status" value="1"/>
</dbReference>
<dbReference type="Pfam" id="PF13616">
    <property type="entry name" value="Rotamase_3"/>
    <property type="match status" value="1"/>
</dbReference>
<dbReference type="Pfam" id="PF09312">
    <property type="entry name" value="SurA_N"/>
    <property type="match status" value="1"/>
</dbReference>
<dbReference type="SUPFAM" id="SSF54534">
    <property type="entry name" value="FKBP-like"/>
    <property type="match status" value="2"/>
</dbReference>
<dbReference type="SUPFAM" id="SSF109998">
    <property type="entry name" value="Triger factor/SurA peptide-binding domain-like"/>
    <property type="match status" value="1"/>
</dbReference>
<dbReference type="PROSITE" id="PS01096">
    <property type="entry name" value="PPIC_PPIASE_1"/>
    <property type="match status" value="2"/>
</dbReference>
<dbReference type="PROSITE" id="PS50198">
    <property type="entry name" value="PPIC_PPIASE_2"/>
    <property type="match status" value="2"/>
</dbReference>
<comment type="function">
    <text evidence="1">Chaperone involved in the correct folding and assembly of outer membrane proteins. Recognizes specific patterns of aromatic residues and the orientation of their side chains, which are found more frequently in integral outer membrane proteins. May act in both early periplasmic and late outer membrane-associated steps of protein maturation.</text>
</comment>
<comment type="catalytic activity">
    <reaction evidence="1">
        <text>[protein]-peptidylproline (omega=180) = [protein]-peptidylproline (omega=0)</text>
        <dbReference type="Rhea" id="RHEA:16237"/>
        <dbReference type="Rhea" id="RHEA-COMP:10747"/>
        <dbReference type="Rhea" id="RHEA-COMP:10748"/>
        <dbReference type="ChEBI" id="CHEBI:83833"/>
        <dbReference type="ChEBI" id="CHEBI:83834"/>
        <dbReference type="EC" id="5.2.1.8"/>
    </reaction>
</comment>
<comment type="subcellular location">
    <subcellularLocation>
        <location evidence="1">Periplasm</location>
    </subcellularLocation>
    <text evidence="1">Is capable of associating with the outer membrane.</text>
</comment>
<comment type="domain">
    <text evidence="1">The PPIase activity resides only in the second parvulin domain. The N-terminal region and the C-terminal tail are necessary and sufficient for the chaperone activity of SurA. The PPIase activity is dispensable for SurA to function as a chaperone. The N-terminal region and the C-terminal tail are also required for porin recognition.</text>
</comment>
<evidence type="ECO:0000255" key="1">
    <source>
        <dbReference type="HAMAP-Rule" id="MF_01183"/>
    </source>
</evidence>
<organism>
    <name type="scientific">Salmonella typhi</name>
    <dbReference type="NCBI Taxonomy" id="90370"/>
    <lineage>
        <taxon>Bacteria</taxon>
        <taxon>Pseudomonadati</taxon>
        <taxon>Pseudomonadota</taxon>
        <taxon>Gammaproteobacteria</taxon>
        <taxon>Enterobacterales</taxon>
        <taxon>Enterobacteriaceae</taxon>
        <taxon>Salmonella</taxon>
    </lineage>
</organism>
<reference key="1">
    <citation type="journal article" date="2003" name="J. Bacteriol.">
        <title>Comparative genomics of Salmonella enterica serovar Typhi strains Ty2 and CT18.</title>
        <authorList>
            <person name="Deng W."/>
            <person name="Liou S.-R."/>
            <person name="Plunkett G. III"/>
            <person name="Mayhew G.F."/>
            <person name="Rose D.J."/>
            <person name="Burland V."/>
            <person name="Kodoyianni V."/>
            <person name="Schwartz D.C."/>
            <person name="Blattner F.R."/>
        </authorList>
    </citation>
    <scope>NUCLEOTIDE SEQUENCE [LARGE SCALE GENOMIC DNA]</scope>
    <source>
        <strain>ATCC 700931 / Ty2</strain>
    </source>
</reference>
<reference key="2">
    <citation type="journal article" date="2001" name="Nature">
        <title>Complete genome sequence of a multiple drug resistant Salmonella enterica serovar Typhi CT18.</title>
        <authorList>
            <person name="Parkhill J."/>
            <person name="Dougan G."/>
            <person name="James K.D."/>
            <person name="Thomson N.R."/>
            <person name="Pickard D."/>
            <person name="Wain J."/>
            <person name="Churcher C.M."/>
            <person name="Mungall K.L."/>
            <person name="Bentley S.D."/>
            <person name="Holden M.T.G."/>
            <person name="Sebaihia M."/>
            <person name="Baker S."/>
            <person name="Basham D."/>
            <person name="Brooks K."/>
            <person name="Chillingworth T."/>
            <person name="Connerton P."/>
            <person name="Cronin A."/>
            <person name="Davis P."/>
            <person name="Davies R.M."/>
            <person name="Dowd L."/>
            <person name="White N."/>
            <person name="Farrar J."/>
            <person name="Feltwell T."/>
            <person name="Hamlin N."/>
            <person name="Haque A."/>
            <person name="Hien T.T."/>
            <person name="Holroyd S."/>
            <person name="Jagels K."/>
            <person name="Krogh A."/>
            <person name="Larsen T.S."/>
            <person name="Leather S."/>
            <person name="Moule S."/>
            <person name="O'Gaora P."/>
            <person name="Parry C."/>
            <person name="Quail M.A."/>
            <person name="Rutherford K.M."/>
            <person name="Simmonds M."/>
            <person name="Skelton J."/>
            <person name="Stevens K."/>
            <person name="Whitehead S."/>
            <person name="Barrell B.G."/>
        </authorList>
    </citation>
    <scope>NUCLEOTIDE SEQUENCE [LARGE SCALE GENOMIC DNA]</scope>
    <source>
        <strain>CT18</strain>
    </source>
</reference>
<protein>
    <recommendedName>
        <fullName evidence="1">Chaperone SurA</fullName>
    </recommendedName>
    <alternativeName>
        <fullName evidence="1">Peptidyl-prolyl cis-trans isomerase SurA</fullName>
        <shortName evidence="1">PPIase SurA</shortName>
        <ecNumber evidence="1">5.2.1.8</ecNumber>
    </alternativeName>
    <alternativeName>
        <fullName evidence="1">Rotamase SurA</fullName>
    </alternativeName>
</protein>
<feature type="signal peptide" evidence="1">
    <location>
        <begin position="1"/>
        <end position="20"/>
    </location>
</feature>
<feature type="chain" id="PRO_0000270036" description="Chaperone SurA">
    <location>
        <begin position="21"/>
        <end position="428"/>
    </location>
</feature>
<feature type="domain" description="PpiC 1" evidence="1">
    <location>
        <begin position="171"/>
        <end position="272"/>
    </location>
</feature>
<feature type="domain" description="PpiC 2" evidence="1">
    <location>
        <begin position="282"/>
        <end position="382"/>
    </location>
</feature>
<accession>Q8XEV3</accession>
<accession>Q7ANL6</accession>
<name>SURA_SALTI</name>
<gene>
    <name evidence="1" type="primary">surA</name>
    <name type="ordered locus">STY0107</name>
    <name type="ordered locus">t0095</name>
</gene>
<keyword id="KW-0143">Chaperone</keyword>
<keyword id="KW-0413">Isomerase</keyword>
<keyword id="KW-0574">Periplasm</keyword>
<keyword id="KW-0677">Repeat</keyword>
<keyword id="KW-0697">Rotamase</keyword>
<keyword id="KW-0732">Signal</keyword>
<sequence length="428" mass="47251">MKNWKTLLLGIAMIANTSFAAPQVVDKVAAVVNNGVVLESDVDGLMQSVKLNAGQAGQQLPDDATLRHQILERLIMDQIILQMGQKMGVKITDEQLDQAIANIAKQNNMTMDQMRSRLAYDGLNYSTYRNQIRKEMIISEVRNNEVRRRITVLPQEVDALAKQIGTQNDASTELNLSHILIALPENPTSEQVNDAQRQAESIVEEARNGADFGKLAITYSADQQALKGGQMGWGRIQELPGIFAQALSTAKKGDIVGPIRSGVGFHILKVNDLRGQSQSISVTEVHARHILLKPSPIMNDQQARLKLEEIAADIKSGKTTFAAAAKEYSQDPGSANQGGDLGWATPDIFDPAFRDALTKLHKGQISAPVHSSFGWHLIELLDTRKVDKTDAAQKDRAYRMLMNRKFSEEAATWMQEQRASAYVKILSN</sequence>
<proteinExistence type="inferred from homology"/>